<comment type="function">
    <text evidence="1">Associates with the EF-Tu.GDP complex and induces the exchange of GDP to GTP. It remains bound to the aminoacyl-tRNA.EF-Tu.GTP complex up to the GTP hydrolysis stage on the ribosome.</text>
</comment>
<comment type="subcellular location">
    <subcellularLocation>
        <location evidence="1">Cytoplasm</location>
    </subcellularLocation>
</comment>
<comment type="similarity">
    <text evidence="1">Belongs to the EF-Ts family.</text>
</comment>
<proteinExistence type="inferred from homology"/>
<evidence type="ECO:0000255" key="1">
    <source>
        <dbReference type="HAMAP-Rule" id="MF_00050"/>
    </source>
</evidence>
<gene>
    <name evidence="1" type="primary">tsf</name>
    <name type="ordered locus">Shew185_1446</name>
</gene>
<accession>A6WLA7</accession>
<name>EFTS_SHEB8</name>
<protein>
    <recommendedName>
        <fullName evidence="1">Elongation factor Ts</fullName>
        <shortName evidence="1">EF-Ts</shortName>
    </recommendedName>
</protein>
<sequence>MAITAAQVKELRDRTGAGMMDCKNALTETNGDMELAIDNMRKSGAAKAAKKAGNIAADGTILIKNGEGFAALLEVNCQTDFVAKDSNFLAFANAVLDAAAASKVTLEDLKAQFEDARVALVTKIGENINIRRVEYIDGANLSSYRHGERIGVVVAGEADEETLKHIAMHVAASKPEYVNPEDVPAEIVAREQALQIEMSMNEGKSAEIAEKMVLGRMKKFTGEISLTGQAYIMEPKKTVGEILKEKGAKVTNFIRLEVGEGIEKKEEDFAAEVAAQIAASKKA</sequence>
<dbReference type="EMBL" id="CP000753">
    <property type="protein sequence ID" value="ABS07596.1"/>
    <property type="molecule type" value="Genomic_DNA"/>
</dbReference>
<dbReference type="RefSeq" id="WP_006085247.1">
    <property type="nucleotide sequence ID" value="NC_009665.1"/>
</dbReference>
<dbReference type="SMR" id="A6WLA7"/>
<dbReference type="GeneID" id="11771731"/>
<dbReference type="KEGG" id="sbm:Shew185_1446"/>
<dbReference type="HOGENOM" id="CLU_047155_0_2_6"/>
<dbReference type="GO" id="GO:0005737">
    <property type="term" value="C:cytoplasm"/>
    <property type="evidence" value="ECO:0007669"/>
    <property type="project" value="UniProtKB-SubCell"/>
</dbReference>
<dbReference type="GO" id="GO:0003746">
    <property type="term" value="F:translation elongation factor activity"/>
    <property type="evidence" value="ECO:0007669"/>
    <property type="project" value="UniProtKB-UniRule"/>
</dbReference>
<dbReference type="CDD" id="cd14275">
    <property type="entry name" value="UBA_EF-Ts"/>
    <property type="match status" value="1"/>
</dbReference>
<dbReference type="FunFam" id="1.10.286.20:FF:000001">
    <property type="entry name" value="Elongation factor Ts"/>
    <property type="match status" value="1"/>
</dbReference>
<dbReference type="FunFam" id="1.10.8.10:FF:000001">
    <property type="entry name" value="Elongation factor Ts"/>
    <property type="match status" value="1"/>
</dbReference>
<dbReference type="FunFam" id="3.30.479.20:FF:000001">
    <property type="entry name" value="Elongation factor Ts"/>
    <property type="match status" value="1"/>
</dbReference>
<dbReference type="Gene3D" id="1.10.286.20">
    <property type="match status" value="1"/>
</dbReference>
<dbReference type="Gene3D" id="1.10.8.10">
    <property type="entry name" value="DNA helicase RuvA subunit, C-terminal domain"/>
    <property type="match status" value="1"/>
</dbReference>
<dbReference type="Gene3D" id="3.30.479.20">
    <property type="entry name" value="Elongation factor Ts, dimerisation domain"/>
    <property type="match status" value="2"/>
</dbReference>
<dbReference type="HAMAP" id="MF_00050">
    <property type="entry name" value="EF_Ts"/>
    <property type="match status" value="1"/>
</dbReference>
<dbReference type="InterPro" id="IPR036402">
    <property type="entry name" value="EF-Ts_dimer_sf"/>
</dbReference>
<dbReference type="InterPro" id="IPR001816">
    <property type="entry name" value="Transl_elong_EFTs/EF1B"/>
</dbReference>
<dbReference type="InterPro" id="IPR014039">
    <property type="entry name" value="Transl_elong_EFTs/EF1B_dimer"/>
</dbReference>
<dbReference type="InterPro" id="IPR018101">
    <property type="entry name" value="Transl_elong_Ts_CS"/>
</dbReference>
<dbReference type="InterPro" id="IPR009060">
    <property type="entry name" value="UBA-like_sf"/>
</dbReference>
<dbReference type="NCBIfam" id="TIGR00116">
    <property type="entry name" value="tsf"/>
    <property type="match status" value="1"/>
</dbReference>
<dbReference type="PANTHER" id="PTHR11741">
    <property type="entry name" value="ELONGATION FACTOR TS"/>
    <property type="match status" value="1"/>
</dbReference>
<dbReference type="PANTHER" id="PTHR11741:SF0">
    <property type="entry name" value="ELONGATION FACTOR TS, MITOCHONDRIAL"/>
    <property type="match status" value="1"/>
</dbReference>
<dbReference type="Pfam" id="PF00889">
    <property type="entry name" value="EF_TS"/>
    <property type="match status" value="1"/>
</dbReference>
<dbReference type="SUPFAM" id="SSF54713">
    <property type="entry name" value="Elongation factor Ts (EF-Ts), dimerisation domain"/>
    <property type="match status" value="2"/>
</dbReference>
<dbReference type="SUPFAM" id="SSF46934">
    <property type="entry name" value="UBA-like"/>
    <property type="match status" value="1"/>
</dbReference>
<dbReference type="PROSITE" id="PS01126">
    <property type="entry name" value="EF_TS_1"/>
    <property type="match status" value="1"/>
</dbReference>
<dbReference type="PROSITE" id="PS01127">
    <property type="entry name" value="EF_TS_2"/>
    <property type="match status" value="1"/>
</dbReference>
<organism>
    <name type="scientific">Shewanella baltica (strain OS185)</name>
    <dbReference type="NCBI Taxonomy" id="402882"/>
    <lineage>
        <taxon>Bacteria</taxon>
        <taxon>Pseudomonadati</taxon>
        <taxon>Pseudomonadota</taxon>
        <taxon>Gammaproteobacteria</taxon>
        <taxon>Alteromonadales</taxon>
        <taxon>Shewanellaceae</taxon>
        <taxon>Shewanella</taxon>
    </lineage>
</organism>
<keyword id="KW-0963">Cytoplasm</keyword>
<keyword id="KW-0251">Elongation factor</keyword>
<keyword id="KW-0648">Protein biosynthesis</keyword>
<reference key="1">
    <citation type="submission" date="2007-07" db="EMBL/GenBank/DDBJ databases">
        <title>Complete sequence of chromosome of Shewanella baltica OS185.</title>
        <authorList>
            <consortium name="US DOE Joint Genome Institute"/>
            <person name="Copeland A."/>
            <person name="Lucas S."/>
            <person name="Lapidus A."/>
            <person name="Barry K."/>
            <person name="Glavina del Rio T."/>
            <person name="Dalin E."/>
            <person name="Tice H."/>
            <person name="Pitluck S."/>
            <person name="Sims D."/>
            <person name="Brettin T."/>
            <person name="Bruce D."/>
            <person name="Detter J.C."/>
            <person name="Han C."/>
            <person name="Schmutz J."/>
            <person name="Larimer F."/>
            <person name="Land M."/>
            <person name="Hauser L."/>
            <person name="Kyrpides N."/>
            <person name="Mikhailova N."/>
            <person name="Brettar I."/>
            <person name="Rodrigues J."/>
            <person name="Konstantinidis K."/>
            <person name="Tiedje J."/>
            <person name="Richardson P."/>
        </authorList>
    </citation>
    <scope>NUCLEOTIDE SEQUENCE [LARGE SCALE GENOMIC DNA]</scope>
    <source>
        <strain>OS185</strain>
    </source>
</reference>
<feature type="chain" id="PRO_1000006174" description="Elongation factor Ts">
    <location>
        <begin position="1"/>
        <end position="283"/>
    </location>
</feature>
<feature type="region of interest" description="Involved in Mg(2+) ion dislocation from EF-Tu" evidence="1">
    <location>
        <begin position="79"/>
        <end position="82"/>
    </location>
</feature>